<sequence length="473" mass="51673">MAPPAARLALLSAAALTLAARPAPGPRSGPECFTANGADYRGTQSWTALQGGKPCLFWNETFQHPYNTLKYPNGEGGLGEHNYCRNPDGDVSPWCYVAEHEDGVYWKYCEIPACQMPGNLGCYKDHGNPPPLTGTSKTSNKLTIQTCISFCRSQRFKFAGMESGYACFCGNNPDYWKHGEAASTECNSVCFGDHTQPCGGDGRIILFDTLVGACGGNYSAMAAVVYSPDFPDTYATGRVCYWTIRVPGASRIHFNFTLFDIRDSADMVELLDGYTHRVLVRLSGRSRPPLSFNVSLDFVILYFFSDRINQAQGFAVLYQATKEEPPQERPAVNQTLAEVITEQANLSVSAAHSSKVLYVITPSPSHPPQTAPGSHSWAPSVGANSHRVEGWTVYGLATLLILTVTAVVAKILLHVTFKSHRVPASGDLRDCRQPGASGDIWTIFYEPSTTISIFKKKLKGQSQQDDRNPLVSD</sequence>
<evidence type="ECO:0000250" key="1">
    <source>
        <dbReference type="UniProtKB" id="Q90Y90"/>
    </source>
</evidence>
<evidence type="ECO:0000250" key="2">
    <source>
        <dbReference type="UniProtKB" id="Q96MU8"/>
    </source>
</evidence>
<evidence type="ECO:0000255" key="3"/>
<evidence type="ECO:0000255" key="4">
    <source>
        <dbReference type="PROSITE-ProRule" id="PRU00059"/>
    </source>
</evidence>
<evidence type="ECO:0000255" key="5">
    <source>
        <dbReference type="PROSITE-ProRule" id="PRU00121"/>
    </source>
</evidence>
<evidence type="ECO:0000255" key="6">
    <source>
        <dbReference type="PROSITE-ProRule" id="PRU00558"/>
    </source>
</evidence>
<evidence type="ECO:0000269" key="7">
    <source>
    </source>
</evidence>
<evidence type="ECO:0000269" key="8">
    <source>
    </source>
</evidence>
<evidence type="ECO:0000269" key="9">
    <source>
    </source>
</evidence>
<evidence type="ECO:0000269" key="10">
    <source>
    </source>
</evidence>
<evidence type="ECO:0000269" key="11">
    <source>
    </source>
</evidence>
<evidence type="ECO:0000305" key="12"/>
<proteinExistence type="evidence at protein level"/>
<reference key="1">
    <citation type="journal article" date="2001" name="Biochim. Biophys. Acta">
        <title>Molecular cloning and characterization of Kremen, a novel kringle-containing transmembrane protein.</title>
        <authorList>
            <person name="Nakamura T."/>
            <person name="Aoki S."/>
            <person name="Kitajima K."/>
            <person name="Takahashi T."/>
            <person name="Matsumoto K."/>
            <person name="Nakamura T."/>
        </authorList>
    </citation>
    <scope>NUCLEOTIDE SEQUENCE [MRNA]</scope>
    <scope>DEVELOPMENTAL STAGE</scope>
    <scope>TISSUE SPECIFICITY</scope>
    <source>
        <tissue>Brain</tissue>
        <tissue>Kidney</tissue>
    </source>
</reference>
<reference key="2">
    <citation type="journal article" date="2005" name="Science">
        <title>The transcriptional landscape of the mammalian genome.</title>
        <authorList>
            <person name="Carninci P."/>
            <person name="Kasukawa T."/>
            <person name="Katayama S."/>
            <person name="Gough J."/>
            <person name="Frith M.C."/>
            <person name="Maeda N."/>
            <person name="Oyama R."/>
            <person name="Ravasi T."/>
            <person name="Lenhard B."/>
            <person name="Wells C."/>
            <person name="Kodzius R."/>
            <person name="Shimokawa K."/>
            <person name="Bajic V.B."/>
            <person name="Brenner S.E."/>
            <person name="Batalov S."/>
            <person name="Forrest A.R."/>
            <person name="Zavolan M."/>
            <person name="Davis M.J."/>
            <person name="Wilming L.G."/>
            <person name="Aidinis V."/>
            <person name="Allen J.E."/>
            <person name="Ambesi-Impiombato A."/>
            <person name="Apweiler R."/>
            <person name="Aturaliya R.N."/>
            <person name="Bailey T.L."/>
            <person name="Bansal M."/>
            <person name="Baxter L."/>
            <person name="Beisel K.W."/>
            <person name="Bersano T."/>
            <person name="Bono H."/>
            <person name="Chalk A.M."/>
            <person name="Chiu K.P."/>
            <person name="Choudhary V."/>
            <person name="Christoffels A."/>
            <person name="Clutterbuck D.R."/>
            <person name="Crowe M.L."/>
            <person name="Dalla E."/>
            <person name="Dalrymple B.P."/>
            <person name="de Bono B."/>
            <person name="Della Gatta G."/>
            <person name="di Bernardo D."/>
            <person name="Down T."/>
            <person name="Engstrom P."/>
            <person name="Fagiolini M."/>
            <person name="Faulkner G."/>
            <person name="Fletcher C.F."/>
            <person name="Fukushima T."/>
            <person name="Furuno M."/>
            <person name="Futaki S."/>
            <person name="Gariboldi M."/>
            <person name="Georgii-Hemming P."/>
            <person name="Gingeras T.R."/>
            <person name="Gojobori T."/>
            <person name="Green R.E."/>
            <person name="Gustincich S."/>
            <person name="Harbers M."/>
            <person name="Hayashi Y."/>
            <person name="Hensch T.K."/>
            <person name="Hirokawa N."/>
            <person name="Hill D."/>
            <person name="Huminiecki L."/>
            <person name="Iacono M."/>
            <person name="Ikeo K."/>
            <person name="Iwama A."/>
            <person name="Ishikawa T."/>
            <person name="Jakt M."/>
            <person name="Kanapin A."/>
            <person name="Katoh M."/>
            <person name="Kawasawa Y."/>
            <person name="Kelso J."/>
            <person name="Kitamura H."/>
            <person name="Kitano H."/>
            <person name="Kollias G."/>
            <person name="Krishnan S.P."/>
            <person name="Kruger A."/>
            <person name="Kummerfeld S.K."/>
            <person name="Kurochkin I.V."/>
            <person name="Lareau L.F."/>
            <person name="Lazarevic D."/>
            <person name="Lipovich L."/>
            <person name="Liu J."/>
            <person name="Liuni S."/>
            <person name="McWilliam S."/>
            <person name="Madan Babu M."/>
            <person name="Madera M."/>
            <person name="Marchionni L."/>
            <person name="Matsuda H."/>
            <person name="Matsuzawa S."/>
            <person name="Miki H."/>
            <person name="Mignone F."/>
            <person name="Miyake S."/>
            <person name="Morris K."/>
            <person name="Mottagui-Tabar S."/>
            <person name="Mulder N."/>
            <person name="Nakano N."/>
            <person name="Nakauchi H."/>
            <person name="Ng P."/>
            <person name="Nilsson R."/>
            <person name="Nishiguchi S."/>
            <person name="Nishikawa S."/>
            <person name="Nori F."/>
            <person name="Ohara O."/>
            <person name="Okazaki Y."/>
            <person name="Orlando V."/>
            <person name="Pang K.C."/>
            <person name="Pavan W.J."/>
            <person name="Pavesi G."/>
            <person name="Pesole G."/>
            <person name="Petrovsky N."/>
            <person name="Piazza S."/>
            <person name="Reed J."/>
            <person name="Reid J.F."/>
            <person name="Ring B.Z."/>
            <person name="Ringwald M."/>
            <person name="Rost B."/>
            <person name="Ruan Y."/>
            <person name="Salzberg S.L."/>
            <person name="Sandelin A."/>
            <person name="Schneider C."/>
            <person name="Schoenbach C."/>
            <person name="Sekiguchi K."/>
            <person name="Semple C.A."/>
            <person name="Seno S."/>
            <person name="Sessa L."/>
            <person name="Sheng Y."/>
            <person name="Shibata Y."/>
            <person name="Shimada H."/>
            <person name="Shimada K."/>
            <person name="Silva D."/>
            <person name="Sinclair B."/>
            <person name="Sperling S."/>
            <person name="Stupka E."/>
            <person name="Sugiura K."/>
            <person name="Sultana R."/>
            <person name="Takenaka Y."/>
            <person name="Taki K."/>
            <person name="Tammoja K."/>
            <person name="Tan S.L."/>
            <person name="Tang S."/>
            <person name="Taylor M.S."/>
            <person name="Tegner J."/>
            <person name="Teichmann S.A."/>
            <person name="Ueda H.R."/>
            <person name="van Nimwegen E."/>
            <person name="Verardo R."/>
            <person name="Wei C.L."/>
            <person name="Yagi K."/>
            <person name="Yamanishi H."/>
            <person name="Zabarovsky E."/>
            <person name="Zhu S."/>
            <person name="Zimmer A."/>
            <person name="Hide W."/>
            <person name="Bult C."/>
            <person name="Grimmond S.M."/>
            <person name="Teasdale R.D."/>
            <person name="Liu E.T."/>
            <person name="Brusic V."/>
            <person name="Quackenbush J."/>
            <person name="Wahlestedt C."/>
            <person name="Mattick J.S."/>
            <person name="Hume D.A."/>
            <person name="Kai C."/>
            <person name="Sasaki D."/>
            <person name="Tomaru Y."/>
            <person name="Fukuda S."/>
            <person name="Kanamori-Katayama M."/>
            <person name="Suzuki M."/>
            <person name="Aoki J."/>
            <person name="Arakawa T."/>
            <person name="Iida J."/>
            <person name="Imamura K."/>
            <person name="Itoh M."/>
            <person name="Kato T."/>
            <person name="Kawaji H."/>
            <person name="Kawagashira N."/>
            <person name="Kawashima T."/>
            <person name="Kojima M."/>
            <person name="Kondo S."/>
            <person name="Konno H."/>
            <person name="Nakano K."/>
            <person name="Ninomiya N."/>
            <person name="Nishio T."/>
            <person name="Okada M."/>
            <person name="Plessy C."/>
            <person name="Shibata K."/>
            <person name="Shiraki T."/>
            <person name="Suzuki S."/>
            <person name="Tagami M."/>
            <person name="Waki K."/>
            <person name="Watahiki A."/>
            <person name="Okamura-Oho Y."/>
            <person name="Suzuki H."/>
            <person name="Kawai J."/>
            <person name="Hayashizaki Y."/>
        </authorList>
    </citation>
    <scope>NUCLEOTIDE SEQUENCE [LARGE SCALE MRNA]</scope>
    <source>
        <strain>C57BL/6J</strain>
    </source>
</reference>
<reference key="3">
    <citation type="journal article" date="2009" name="PLoS Biol.">
        <title>Lineage-specific biology revealed by a finished genome assembly of the mouse.</title>
        <authorList>
            <person name="Church D.M."/>
            <person name="Goodstadt L."/>
            <person name="Hillier L.W."/>
            <person name="Zody M.C."/>
            <person name="Goldstein S."/>
            <person name="She X."/>
            <person name="Bult C.J."/>
            <person name="Agarwala R."/>
            <person name="Cherry J.L."/>
            <person name="DiCuccio M."/>
            <person name="Hlavina W."/>
            <person name="Kapustin Y."/>
            <person name="Meric P."/>
            <person name="Maglott D."/>
            <person name="Birtle Z."/>
            <person name="Marques A.C."/>
            <person name="Graves T."/>
            <person name="Zhou S."/>
            <person name="Teague B."/>
            <person name="Potamousis K."/>
            <person name="Churas C."/>
            <person name="Place M."/>
            <person name="Herschleb J."/>
            <person name="Runnheim R."/>
            <person name="Forrest D."/>
            <person name="Amos-Landgraf J."/>
            <person name="Schwartz D.C."/>
            <person name="Cheng Z."/>
            <person name="Lindblad-Toh K."/>
            <person name="Eichler E.E."/>
            <person name="Ponting C.P."/>
        </authorList>
    </citation>
    <scope>NUCLEOTIDE SEQUENCE [LARGE SCALE GENOMIC DNA]</scope>
    <source>
        <strain>C57BL/6J</strain>
    </source>
</reference>
<reference key="4">
    <citation type="journal article" date="2004" name="Genome Res.">
        <title>The status, quality, and expansion of the NIH full-length cDNA project: the Mammalian Gene Collection (MGC).</title>
        <authorList>
            <consortium name="The MGC Project Team"/>
        </authorList>
    </citation>
    <scope>NUCLEOTIDE SEQUENCE [LARGE SCALE MRNA]</scope>
    <source>
        <strain>C57BL/6J</strain>
        <tissue>Brain</tissue>
    </source>
</reference>
<reference key="5">
    <citation type="journal article" date="2002" name="Nature">
        <title>Kremen proteins are Dickkopf receptors that regulate Wnt/beta-catenin signalling.</title>
        <authorList>
            <person name="Mao B."/>
            <person name="Wu W."/>
            <person name="Davidson G."/>
            <person name="Marhold J."/>
            <person name="Li M."/>
            <person name="Mechler B.M."/>
            <person name="Delius H."/>
            <person name="Hoppe D."/>
            <person name="Stannek P."/>
            <person name="Walter C."/>
            <person name="Glinka A."/>
            <person name="Niehrs C."/>
        </authorList>
    </citation>
    <scope>FUNCTION</scope>
    <scope>IDENTIFICATION IN A TERNARY COMPLEX WITH DKK1 AND LRP6</scope>
</reference>
<reference key="6">
    <citation type="journal article" date="2008" name="Mol. Cell. Biol.">
        <title>Targeted disruption of the Wnt regulator Kremen induces limb defects and high bone density.</title>
        <authorList>
            <person name="Ellwanger K."/>
            <person name="Saito H."/>
            <person name="Clement-Lacroix P."/>
            <person name="Maltry N."/>
            <person name="Niedermeyer J."/>
            <person name="Lee W.K."/>
            <person name="Baron R."/>
            <person name="Rawadi G."/>
            <person name="Westphal H."/>
            <person name="Niehrs C."/>
        </authorList>
    </citation>
    <scope>FUNCTION</scope>
    <scope>DEVELOPMENTAL STAGE</scope>
    <scope>DISRUPTION PHENOTYPE</scope>
</reference>
<reference key="7">
    <citation type="journal article" date="2016" name="Cell Death Differ.">
        <title>Kremen1 and Dickkopf1 control cell survival in a Wnt-independent manner.</title>
        <authorList>
            <person name="Causeret F."/>
            <person name="Sumia I."/>
            <person name="Pierani A."/>
        </authorList>
    </citation>
    <scope>FUNCTION</scope>
    <scope>DEVELOPMENTAL STAGE</scope>
    <scope>MUTAGENESIS OF SER-419; SER-437; ILE-453; SER-472 AND ASP-473</scope>
</reference>
<reference key="8">
    <citation type="journal article" date="2016" name="Sci. Rep.">
        <title>Kremen1 regulates mechanosensory hair cell development in the mammalian cochlea and the zebrafish lateral line.</title>
        <authorList>
            <person name="Mulvaney J.F."/>
            <person name="Thompkins C."/>
            <person name="Noda T."/>
            <person name="Nishimura K."/>
            <person name="Sun W.W."/>
            <person name="Lin S.Y."/>
            <person name="Coffin A."/>
            <person name="Dabdoub A."/>
        </authorList>
    </citation>
    <scope>FUNCTION</scope>
    <scope>SUBCELLULAR LOCATION</scope>
    <scope>TISSUE SPECIFICITY</scope>
    <scope>DEVELOPMENTAL STAGE</scope>
</reference>
<feature type="signal peptide" evidence="3">
    <location>
        <begin position="1"/>
        <end position="19"/>
    </location>
</feature>
<feature type="chain" id="PRO_0000021565" description="Kremen protein 1">
    <location>
        <begin position="20"/>
        <end position="473"/>
    </location>
</feature>
<feature type="topological domain" description="Extracellular" evidence="3">
    <location>
        <begin position="21"/>
        <end position="392"/>
    </location>
</feature>
<feature type="transmembrane region" description="Helical" evidence="3">
    <location>
        <begin position="393"/>
        <end position="413"/>
    </location>
</feature>
<feature type="topological domain" description="Cytoplasmic" evidence="3">
    <location>
        <begin position="414"/>
        <end position="473"/>
    </location>
</feature>
<feature type="domain" description="Kringle" evidence="5">
    <location>
        <begin position="31"/>
        <end position="114"/>
    </location>
</feature>
<feature type="domain" description="WSC" evidence="6">
    <location>
        <begin position="116"/>
        <end position="210"/>
    </location>
</feature>
<feature type="domain" description="CUB" evidence="4">
    <location>
        <begin position="214"/>
        <end position="321"/>
    </location>
</feature>
<feature type="region of interest" description="Essential for apoptotic activity" evidence="10">
    <location>
        <begin position="414"/>
        <end position="473"/>
    </location>
</feature>
<feature type="glycosylation site" description="N-linked (GlcNAc...) asparagine" evidence="3">
    <location>
        <position position="59"/>
    </location>
</feature>
<feature type="glycosylation site" description="N-linked (GlcNAc...) asparagine" evidence="3">
    <location>
        <position position="217"/>
    </location>
</feature>
<feature type="glycosylation site" description="N-linked (GlcNAc...) asparagine" evidence="3">
    <location>
        <position position="255"/>
    </location>
</feature>
<feature type="glycosylation site" description="N-linked (GlcNAc...) asparagine" evidence="3">
    <location>
        <position position="293"/>
    </location>
</feature>
<feature type="glycosylation site" description="N-linked (GlcNAc...) asparagine" evidence="3">
    <location>
        <position position="333"/>
    </location>
</feature>
<feature type="glycosylation site" description="N-linked (GlcNAc...) asparagine" evidence="3">
    <location>
        <position position="345"/>
    </location>
</feature>
<feature type="disulfide bond" evidence="2">
    <location>
        <begin position="32"/>
        <end position="114"/>
    </location>
</feature>
<feature type="disulfide bond" evidence="2">
    <location>
        <begin position="55"/>
        <end position="95"/>
    </location>
</feature>
<feature type="disulfide bond" evidence="2">
    <location>
        <begin position="84"/>
        <end position="109"/>
    </location>
</feature>
<feature type="disulfide bond" evidence="2">
    <location>
        <begin position="122"/>
        <end position="186"/>
    </location>
</feature>
<feature type="disulfide bond" evidence="2">
    <location>
        <begin position="147"/>
        <end position="167"/>
    </location>
</feature>
<feature type="disulfide bond" evidence="2">
    <location>
        <begin position="151"/>
        <end position="169"/>
    </location>
</feature>
<feature type="disulfide bond" evidence="2">
    <location>
        <begin position="190"/>
        <end position="198"/>
    </location>
</feature>
<feature type="disulfide bond" evidence="2">
    <location>
        <begin position="214"/>
        <end position="240"/>
    </location>
</feature>
<feature type="mutagenesis site" description="Significant reduction of apoptotic activity." evidence="10">
    <original>S</original>
    <variation>F</variation>
    <location>
        <position position="419"/>
    </location>
</feature>
<feature type="mutagenesis site" description="Significant reduction of apoptotic activity." evidence="10">
    <original>S</original>
    <variation>L</variation>
    <location>
        <position position="437"/>
    </location>
</feature>
<feature type="mutagenesis site" description="Significant reduction of apoptotic activity." evidence="10">
    <original>I</original>
    <variation>V</variation>
    <location>
        <position position="453"/>
    </location>
</feature>
<feature type="mutagenesis site" description="Complete loss of apoptotic activity." evidence="10">
    <original>S</original>
    <variation>G</variation>
    <location>
        <position position="472"/>
    </location>
</feature>
<feature type="mutagenesis site" description="Complete loss of apoptotic activity." evidence="10">
    <original>D</original>
    <variation>N</variation>
    <location>
        <position position="473"/>
    </location>
</feature>
<feature type="sequence conflict" description="In Ref. 1; BAB40968." evidence="12" ref="1">
    <original>R</original>
    <variation>K</variation>
    <location>
        <position position="238"/>
    </location>
</feature>
<feature type="sequence conflict" description="In Ref. 1; BAB40968." evidence="12" ref="1">
    <original>G</original>
    <variation>E</variation>
    <location>
        <position position="248"/>
    </location>
</feature>
<feature type="sequence conflict" description="In Ref. 1; BAB40968." evidence="12" ref="1">
    <original>D</original>
    <variation>N</variation>
    <location>
        <position position="266"/>
    </location>
</feature>
<gene>
    <name type="primary">Kremen1</name>
    <name type="synonym">Kremen</name>
</gene>
<dbReference type="EMBL" id="AB059617">
    <property type="protein sequence ID" value="BAB40968.1"/>
    <property type="molecule type" value="mRNA"/>
</dbReference>
<dbReference type="EMBL" id="AK141321">
    <property type="protein sequence ID" value="BAE24649.1"/>
    <property type="molecule type" value="mRNA"/>
</dbReference>
<dbReference type="EMBL" id="AL662853">
    <property type="status" value="NOT_ANNOTATED_CDS"/>
    <property type="molecule type" value="Genomic_DNA"/>
</dbReference>
<dbReference type="EMBL" id="BC082546">
    <property type="protein sequence ID" value="AAH82546.1"/>
    <property type="molecule type" value="mRNA"/>
</dbReference>
<dbReference type="EMBL" id="BC138465">
    <property type="protein sequence ID" value="AAI38466.1"/>
    <property type="molecule type" value="mRNA"/>
</dbReference>
<dbReference type="EMBL" id="BC138464">
    <property type="protein sequence ID" value="AAI38465.1"/>
    <property type="molecule type" value="mRNA"/>
</dbReference>
<dbReference type="CCDS" id="CCDS24399.1"/>
<dbReference type="RefSeq" id="NP_115772.2">
    <property type="nucleotide sequence ID" value="NM_032396.3"/>
</dbReference>
<dbReference type="SMR" id="Q99N43"/>
<dbReference type="CORUM" id="Q99N43"/>
<dbReference type="FunCoup" id="Q99N43">
    <property type="interactions" value="365"/>
</dbReference>
<dbReference type="STRING" id="10090.ENSMUSP00000020662"/>
<dbReference type="GlyCosmos" id="Q99N43">
    <property type="glycosylation" value="6 sites, No reported glycans"/>
</dbReference>
<dbReference type="GlyGen" id="Q99N43">
    <property type="glycosylation" value="6 sites, 2 N-linked glycans (2 sites)"/>
</dbReference>
<dbReference type="PhosphoSitePlus" id="Q99N43"/>
<dbReference type="PaxDb" id="10090-ENSMUSP00000020662"/>
<dbReference type="PeptideAtlas" id="Q99N43"/>
<dbReference type="ProteomicsDB" id="263462"/>
<dbReference type="Antibodypedia" id="24417">
    <property type="antibodies" value="316 antibodies from 28 providers"/>
</dbReference>
<dbReference type="DNASU" id="84035"/>
<dbReference type="Ensembl" id="ENSMUST00000020662.15">
    <property type="protein sequence ID" value="ENSMUSP00000020662.9"/>
    <property type="gene ID" value="ENSMUSG00000020393.17"/>
</dbReference>
<dbReference type="GeneID" id="84035"/>
<dbReference type="KEGG" id="mmu:84035"/>
<dbReference type="UCSC" id="uc007hwh.1">
    <property type="organism name" value="mouse"/>
</dbReference>
<dbReference type="AGR" id="MGI:1933988"/>
<dbReference type="CTD" id="83999"/>
<dbReference type="MGI" id="MGI:1933988">
    <property type="gene designation" value="Kremen1"/>
</dbReference>
<dbReference type="VEuPathDB" id="HostDB:ENSMUSG00000020393"/>
<dbReference type="eggNOG" id="KOG4157">
    <property type="taxonomic scope" value="Eukaryota"/>
</dbReference>
<dbReference type="GeneTree" id="ENSGT00940000158390"/>
<dbReference type="HOGENOM" id="CLU_043485_0_0_1"/>
<dbReference type="InParanoid" id="Q99N43"/>
<dbReference type="OMA" id="RACYWTI"/>
<dbReference type="OrthoDB" id="4781at2759"/>
<dbReference type="PhylomeDB" id="Q99N43"/>
<dbReference type="TreeFam" id="TF331319"/>
<dbReference type="Reactome" id="R-MMU-3772470">
    <property type="pathway name" value="Negative regulation of TCF-dependent signaling by WNT ligand antagonists"/>
</dbReference>
<dbReference type="BioGRID-ORCS" id="84035">
    <property type="hits" value="3 hits in 78 CRISPR screens"/>
</dbReference>
<dbReference type="ChiTaRS" id="Kremen1">
    <property type="organism name" value="mouse"/>
</dbReference>
<dbReference type="PRO" id="PR:Q99N43"/>
<dbReference type="Proteomes" id="UP000000589">
    <property type="component" value="Chromosome 11"/>
</dbReference>
<dbReference type="RNAct" id="Q99N43">
    <property type="molecule type" value="protein"/>
</dbReference>
<dbReference type="Bgee" id="ENSMUSG00000020393">
    <property type="expression patterns" value="Expressed in interventricular septum and 248 other cell types or tissues"/>
</dbReference>
<dbReference type="ExpressionAtlas" id="Q99N43">
    <property type="expression patterns" value="baseline and differential"/>
</dbReference>
<dbReference type="GO" id="GO:0016020">
    <property type="term" value="C:membrane"/>
    <property type="evidence" value="ECO:0000250"/>
    <property type="project" value="MGI"/>
</dbReference>
<dbReference type="GO" id="GO:0043025">
    <property type="term" value="C:neuronal cell body"/>
    <property type="evidence" value="ECO:0000314"/>
    <property type="project" value="ARUK-UCL"/>
</dbReference>
<dbReference type="GO" id="GO:0005886">
    <property type="term" value="C:plasma membrane"/>
    <property type="evidence" value="ECO:0007669"/>
    <property type="project" value="UniProtKB-SubCell"/>
</dbReference>
<dbReference type="GO" id="GO:0006915">
    <property type="term" value="P:apoptotic process"/>
    <property type="evidence" value="ECO:0000315"/>
    <property type="project" value="UniProtKB"/>
</dbReference>
<dbReference type="GO" id="GO:0060173">
    <property type="term" value="P:limb development"/>
    <property type="evidence" value="ECO:0000315"/>
    <property type="project" value="UniProtKB"/>
</dbReference>
<dbReference type="GO" id="GO:0048681">
    <property type="term" value="P:negative regulation of axon regeneration"/>
    <property type="evidence" value="ECO:0000315"/>
    <property type="project" value="ARUK-UCL"/>
</dbReference>
<dbReference type="GO" id="GO:0090090">
    <property type="term" value="P:negative regulation of canonical Wnt signaling pathway"/>
    <property type="evidence" value="ECO:0000315"/>
    <property type="project" value="UniProtKB"/>
</dbReference>
<dbReference type="GO" id="GO:0030279">
    <property type="term" value="P:negative regulation of ossification"/>
    <property type="evidence" value="ECO:0000315"/>
    <property type="project" value="UniProtKB"/>
</dbReference>
<dbReference type="GO" id="GO:0016055">
    <property type="term" value="P:Wnt signaling pathway"/>
    <property type="evidence" value="ECO:0007669"/>
    <property type="project" value="UniProtKB-KW"/>
</dbReference>
<dbReference type="CDD" id="cd00041">
    <property type="entry name" value="CUB"/>
    <property type="match status" value="1"/>
</dbReference>
<dbReference type="CDD" id="cd00108">
    <property type="entry name" value="KR"/>
    <property type="match status" value="1"/>
</dbReference>
<dbReference type="FunFam" id="2.40.20.10:FF:000006">
    <property type="entry name" value="Kremen protein 2"/>
    <property type="match status" value="1"/>
</dbReference>
<dbReference type="Gene3D" id="2.40.20.10">
    <property type="entry name" value="Plasminogen Kringle 4"/>
    <property type="match status" value="1"/>
</dbReference>
<dbReference type="Gene3D" id="2.60.120.290">
    <property type="entry name" value="Spermadhesin, CUB domain"/>
    <property type="match status" value="1"/>
</dbReference>
<dbReference type="InterPro" id="IPR000859">
    <property type="entry name" value="CUB_dom"/>
</dbReference>
<dbReference type="InterPro" id="IPR017076">
    <property type="entry name" value="Kremen"/>
</dbReference>
<dbReference type="InterPro" id="IPR051836">
    <property type="entry name" value="Kremen_rcpt"/>
</dbReference>
<dbReference type="InterPro" id="IPR000001">
    <property type="entry name" value="Kringle"/>
</dbReference>
<dbReference type="InterPro" id="IPR013806">
    <property type="entry name" value="Kringle-like"/>
</dbReference>
<dbReference type="InterPro" id="IPR018056">
    <property type="entry name" value="Kringle_CS"/>
</dbReference>
<dbReference type="InterPro" id="IPR038178">
    <property type="entry name" value="Kringle_sf"/>
</dbReference>
<dbReference type="InterPro" id="IPR035914">
    <property type="entry name" value="Sperma_CUB_dom_sf"/>
</dbReference>
<dbReference type="InterPro" id="IPR002889">
    <property type="entry name" value="WSC_carb-bd"/>
</dbReference>
<dbReference type="PANTHER" id="PTHR24269">
    <property type="entry name" value="KREMEN PROTEIN"/>
    <property type="match status" value="1"/>
</dbReference>
<dbReference type="PANTHER" id="PTHR24269:SF13">
    <property type="entry name" value="KREMEN PROTEIN 1"/>
    <property type="match status" value="1"/>
</dbReference>
<dbReference type="Pfam" id="PF00431">
    <property type="entry name" value="CUB"/>
    <property type="match status" value="1"/>
</dbReference>
<dbReference type="Pfam" id="PF00051">
    <property type="entry name" value="Kringle"/>
    <property type="match status" value="1"/>
</dbReference>
<dbReference type="Pfam" id="PF01822">
    <property type="entry name" value="WSC"/>
    <property type="match status" value="1"/>
</dbReference>
<dbReference type="PIRSF" id="PIRSF036961">
    <property type="entry name" value="Kremen"/>
    <property type="match status" value="1"/>
</dbReference>
<dbReference type="PRINTS" id="PR00018">
    <property type="entry name" value="KRINGLE"/>
</dbReference>
<dbReference type="SMART" id="SM00042">
    <property type="entry name" value="CUB"/>
    <property type="match status" value="1"/>
</dbReference>
<dbReference type="SMART" id="SM00130">
    <property type="entry name" value="KR"/>
    <property type="match status" value="1"/>
</dbReference>
<dbReference type="SMART" id="SM00321">
    <property type="entry name" value="WSC"/>
    <property type="match status" value="1"/>
</dbReference>
<dbReference type="SUPFAM" id="SSF57440">
    <property type="entry name" value="Kringle-like"/>
    <property type="match status" value="1"/>
</dbReference>
<dbReference type="SUPFAM" id="SSF49854">
    <property type="entry name" value="Spermadhesin, CUB domain"/>
    <property type="match status" value="1"/>
</dbReference>
<dbReference type="PROSITE" id="PS01180">
    <property type="entry name" value="CUB"/>
    <property type="match status" value="1"/>
</dbReference>
<dbReference type="PROSITE" id="PS00021">
    <property type="entry name" value="KRINGLE_1"/>
    <property type="match status" value="1"/>
</dbReference>
<dbReference type="PROSITE" id="PS50070">
    <property type="entry name" value="KRINGLE_2"/>
    <property type="match status" value="1"/>
</dbReference>
<dbReference type="PROSITE" id="PS51212">
    <property type="entry name" value="WSC"/>
    <property type="match status" value="1"/>
</dbReference>
<accession>Q99N43</accession>
<accession>Q640Q6</accession>
<keyword id="KW-1003">Cell membrane</keyword>
<keyword id="KW-1015">Disulfide bond</keyword>
<keyword id="KW-0325">Glycoprotein</keyword>
<keyword id="KW-0420">Kringle</keyword>
<keyword id="KW-0472">Membrane</keyword>
<keyword id="KW-1185">Reference proteome</keyword>
<keyword id="KW-0732">Signal</keyword>
<keyword id="KW-0812">Transmembrane</keyword>
<keyword id="KW-1133">Transmembrane helix</keyword>
<keyword id="KW-0879">Wnt signaling pathway</keyword>
<comment type="function">
    <text evidence="1 8 9 10 11">Receptor for Dickkopf proteins. Cooperates with DKK1/2 to inhibit Wnt/beta-catenin signaling by promoting the endocytosis of Wnt receptors LRP5 and LRP6 (PubMed:12050670). In the absence of DKK1, potentiates Wnt-beta-catenin signaling by maintaining LRP5 or LRP6 at the cell membrane (By similarity). Can trigger apoptosis in a Wnt-independent manner and this apoptotic activity is inhibited upon binding of the ligand DKK1 (PubMed:26206087). Plays a role in limb development; attenuates Wnt signaling in the developing limb to allow normal limb patterning and can also negatively regulate bone formation (PubMed:18505822). Modulates cell fate decisions in the developing cochlea with an inhibitory role in hair cell fate specification (PubMed:27550540).</text>
</comment>
<comment type="subunit">
    <text evidence="2 8">Forms a ternary complex with DKK1 and LRP6 (PubMed:12050670). Interacts with LRP6 in a DKK1-dependent manner. Interacts with DKK1 and RSPO1 (via FU repeats) (By similarity).</text>
</comment>
<comment type="subcellular location">
    <subcellularLocation>
        <location evidence="11">Cell membrane</location>
        <topology evidence="12">Single-pass type I membrane protein</topology>
    </subcellularLocation>
</comment>
<comment type="tissue specificity">
    <text evidence="7">In the adult, widely expressed with high levels in heart, lung, kidney, skeletal muscle and testis.</text>
</comment>
<comment type="developmental stage">
    <text evidence="7 9 10 11">Expressed in the developing cochlea. Expressed first in the prosensory domain and the expression is restricted to supporting cells as development proceeds (at protein level). In the embryo, expression is first detected on day 9 and increases up to day 18. Lower levels are found in adult. At 9.5 dpc, expression is localized to the apical ectodermal ridge (AER) of the developing fore- and hindlimb buds, the telencephalon and the first brachial arch. At 10.5 dpc, expression is also observed in the myotome and in sensory tissues such as the nasal pit and optic vesicle. Expressed in the developing brain and developing limb buds.</text>
</comment>
<comment type="disruption phenotype">
    <text evidence="9">Animals with a double knockout of KREM1 and KREM2 exhibit enhanced Wnt signaling accompanied by ectopic postaxial forelimb digits and expanded apical ectodermal ridges. They also exhibit increased bone volume and bone formation rates. Triple knockout mice KREM1/KREM2/DKK1 exhibit enhanced growth of ectopic digits.</text>
</comment>
<name>KREM1_MOUSE</name>
<protein>
    <recommendedName>
        <fullName>Kremen protein 1</fullName>
    </recommendedName>
    <alternativeName>
        <fullName>Dickkopf receptor</fullName>
    </alternativeName>
    <alternativeName>
        <fullName>Kringle domain-containing transmembrane protein 1</fullName>
    </alternativeName>
    <alternativeName>
        <fullName>Kringle-containing protein marking the eye and the nose</fullName>
    </alternativeName>
</protein>
<organism>
    <name type="scientific">Mus musculus</name>
    <name type="common">Mouse</name>
    <dbReference type="NCBI Taxonomy" id="10090"/>
    <lineage>
        <taxon>Eukaryota</taxon>
        <taxon>Metazoa</taxon>
        <taxon>Chordata</taxon>
        <taxon>Craniata</taxon>
        <taxon>Vertebrata</taxon>
        <taxon>Euteleostomi</taxon>
        <taxon>Mammalia</taxon>
        <taxon>Eutheria</taxon>
        <taxon>Euarchontoglires</taxon>
        <taxon>Glires</taxon>
        <taxon>Rodentia</taxon>
        <taxon>Myomorpha</taxon>
        <taxon>Muroidea</taxon>
        <taxon>Muridae</taxon>
        <taxon>Murinae</taxon>
        <taxon>Mus</taxon>
        <taxon>Mus</taxon>
    </lineage>
</organism>